<accession>Q92624</accession>
<accession>A8K862</accession>
<accession>O95095</accession>
<accession>Q8WVC9</accession>
<reference key="1">
    <citation type="journal article" date="1998" name="Proc. Natl. Acad. Sci. U.S.A.">
        <title>PAT1, a microtubule-interacting protein, recognizes the basolateral sorting signal of amyloid precursor protein.</title>
        <authorList>
            <person name="Zheng P."/>
            <person name="Eastman J."/>
            <person name="Vande Pol S."/>
            <person name="Pimplikar S.W."/>
        </authorList>
    </citation>
    <scope>NUCLEOTIDE SEQUENCE [MRNA]</scope>
    <scope>FUNCTION</scope>
    <scope>INTERACTION WITH APP</scope>
    <scope>SUBCELLULAR LOCATION</scope>
    <source>
        <tissue>Cervix carcinoma</tissue>
    </source>
</reference>
<reference key="2">
    <citation type="journal article" date="1996" name="DNA Res.">
        <title>Prediction of the coding sequences of unidentified human genes. VI. The coding sequences of 80 new genes (KIAA0201-KIAA0280) deduced by analysis of cDNA clones from cell line KG-1 and brain.</title>
        <authorList>
            <person name="Nagase T."/>
            <person name="Seki N."/>
            <person name="Ishikawa K."/>
            <person name="Ohira M."/>
            <person name="Kawarabayasi Y."/>
            <person name="Ohara O."/>
            <person name="Tanaka A."/>
            <person name="Kotani H."/>
            <person name="Miyajima N."/>
            <person name="Nomura N."/>
        </authorList>
    </citation>
    <scope>NUCLEOTIDE SEQUENCE [LARGE SCALE MRNA]</scope>
    <source>
        <tissue>Bone marrow</tissue>
    </source>
</reference>
<reference key="3">
    <citation type="journal article" date="2004" name="Nat. Genet.">
        <title>Complete sequencing and characterization of 21,243 full-length human cDNAs.</title>
        <authorList>
            <person name="Ota T."/>
            <person name="Suzuki Y."/>
            <person name="Nishikawa T."/>
            <person name="Otsuki T."/>
            <person name="Sugiyama T."/>
            <person name="Irie R."/>
            <person name="Wakamatsu A."/>
            <person name="Hayashi K."/>
            <person name="Sato H."/>
            <person name="Nagai K."/>
            <person name="Kimura K."/>
            <person name="Makita H."/>
            <person name="Sekine M."/>
            <person name="Obayashi M."/>
            <person name="Nishi T."/>
            <person name="Shibahara T."/>
            <person name="Tanaka T."/>
            <person name="Ishii S."/>
            <person name="Yamamoto J."/>
            <person name="Saito K."/>
            <person name="Kawai Y."/>
            <person name="Isono Y."/>
            <person name="Nakamura Y."/>
            <person name="Nagahari K."/>
            <person name="Murakami K."/>
            <person name="Yasuda T."/>
            <person name="Iwayanagi T."/>
            <person name="Wagatsuma M."/>
            <person name="Shiratori A."/>
            <person name="Sudo H."/>
            <person name="Hosoiri T."/>
            <person name="Kaku Y."/>
            <person name="Kodaira H."/>
            <person name="Kondo H."/>
            <person name="Sugawara M."/>
            <person name="Takahashi M."/>
            <person name="Kanda K."/>
            <person name="Yokoi T."/>
            <person name="Furuya T."/>
            <person name="Kikkawa E."/>
            <person name="Omura Y."/>
            <person name="Abe K."/>
            <person name="Kamihara K."/>
            <person name="Katsuta N."/>
            <person name="Sato K."/>
            <person name="Tanikawa M."/>
            <person name="Yamazaki M."/>
            <person name="Ninomiya K."/>
            <person name="Ishibashi T."/>
            <person name="Yamashita H."/>
            <person name="Murakawa K."/>
            <person name="Fujimori K."/>
            <person name="Tanai H."/>
            <person name="Kimata M."/>
            <person name="Watanabe M."/>
            <person name="Hiraoka S."/>
            <person name="Chiba Y."/>
            <person name="Ishida S."/>
            <person name="Ono Y."/>
            <person name="Takiguchi S."/>
            <person name="Watanabe S."/>
            <person name="Yosida M."/>
            <person name="Hotuta T."/>
            <person name="Kusano J."/>
            <person name="Kanehori K."/>
            <person name="Takahashi-Fujii A."/>
            <person name="Hara H."/>
            <person name="Tanase T.-O."/>
            <person name="Nomura Y."/>
            <person name="Togiya S."/>
            <person name="Komai F."/>
            <person name="Hara R."/>
            <person name="Takeuchi K."/>
            <person name="Arita M."/>
            <person name="Imose N."/>
            <person name="Musashino K."/>
            <person name="Yuuki H."/>
            <person name="Oshima A."/>
            <person name="Sasaki N."/>
            <person name="Aotsuka S."/>
            <person name="Yoshikawa Y."/>
            <person name="Matsunawa H."/>
            <person name="Ichihara T."/>
            <person name="Shiohata N."/>
            <person name="Sano S."/>
            <person name="Moriya S."/>
            <person name="Momiyama H."/>
            <person name="Satoh N."/>
            <person name="Takami S."/>
            <person name="Terashima Y."/>
            <person name="Suzuki O."/>
            <person name="Nakagawa S."/>
            <person name="Senoh A."/>
            <person name="Mizoguchi H."/>
            <person name="Goto Y."/>
            <person name="Shimizu F."/>
            <person name="Wakebe H."/>
            <person name="Hishigaki H."/>
            <person name="Watanabe T."/>
            <person name="Sugiyama A."/>
            <person name="Takemoto M."/>
            <person name="Kawakami B."/>
            <person name="Yamazaki M."/>
            <person name="Watanabe K."/>
            <person name="Kumagai A."/>
            <person name="Itakura S."/>
            <person name="Fukuzumi Y."/>
            <person name="Fujimori Y."/>
            <person name="Komiyama M."/>
            <person name="Tashiro H."/>
            <person name="Tanigami A."/>
            <person name="Fujiwara T."/>
            <person name="Ono T."/>
            <person name="Yamada K."/>
            <person name="Fujii Y."/>
            <person name="Ozaki K."/>
            <person name="Hirao M."/>
            <person name="Ohmori Y."/>
            <person name="Kawabata A."/>
            <person name="Hikiji T."/>
            <person name="Kobatake N."/>
            <person name="Inagaki H."/>
            <person name="Ikema Y."/>
            <person name="Okamoto S."/>
            <person name="Okitani R."/>
            <person name="Kawakami T."/>
            <person name="Noguchi S."/>
            <person name="Itoh T."/>
            <person name="Shigeta K."/>
            <person name="Senba T."/>
            <person name="Matsumura K."/>
            <person name="Nakajima Y."/>
            <person name="Mizuno T."/>
            <person name="Morinaga M."/>
            <person name="Sasaki M."/>
            <person name="Togashi T."/>
            <person name="Oyama M."/>
            <person name="Hata H."/>
            <person name="Watanabe M."/>
            <person name="Komatsu T."/>
            <person name="Mizushima-Sugano J."/>
            <person name="Satoh T."/>
            <person name="Shirai Y."/>
            <person name="Takahashi Y."/>
            <person name="Nakagawa K."/>
            <person name="Okumura K."/>
            <person name="Nagase T."/>
            <person name="Nomura N."/>
            <person name="Kikuchi H."/>
            <person name="Masuho Y."/>
            <person name="Yamashita R."/>
            <person name="Nakai K."/>
            <person name="Yada T."/>
            <person name="Nakamura Y."/>
            <person name="Ohara O."/>
            <person name="Isogai T."/>
            <person name="Sugano S."/>
        </authorList>
    </citation>
    <scope>NUCLEOTIDE SEQUENCE [LARGE SCALE MRNA]</scope>
    <source>
        <tissue>Testis</tissue>
    </source>
</reference>
<reference key="4">
    <citation type="submission" date="2005-07" db="EMBL/GenBank/DDBJ databases">
        <authorList>
            <person name="Mural R.J."/>
            <person name="Istrail S."/>
            <person name="Sutton G.G."/>
            <person name="Florea L."/>
            <person name="Halpern A.L."/>
            <person name="Mobarry C.M."/>
            <person name="Lippert R."/>
            <person name="Walenz B."/>
            <person name="Shatkay H."/>
            <person name="Dew I."/>
            <person name="Miller J.R."/>
            <person name="Flanigan M.J."/>
            <person name="Edwards N.J."/>
            <person name="Bolanos R."/>
            <person name="Fasulo D."/>
            <person name="Halldorsson B.V."/>
            <person name="Hannenhalli S."/>
            <person name="Turner R."/>
            <person name="Yooseph S."/>
            <person name="Lu F."/>
            <person name="Nusskern D.R."/>
            <person name="Shue B.C."/>
            <person name="Zheng X.H."/>
            <person name="Zhong F."/>
            <person name="Delcher A.L."/>
            <person name="Huson D.H."/>
            <person name="Kravitz S.A."/>
            <person name="Mouchard L."/>
            <person name="Reinert K."/>
            <person name="Remington K.A."/>
            <person name="Clark A.G."/>
            <person name="Waterman M.S."/>
            <person name="Eichler E.E."/>
            <person name="Adams M.D."/>
            <person name="Hunkapiller M.W."/>
            <person name="Myers E.W."/>
            <person name="Venter J.C."/>
        </authorList>
    </citation>
    <scope>NUCLEOTIDE SEQUENCE [LARGE SCALE GENOMIC DNA]</scope>
</reference>
<reference key="5">
    <citation type="journal article" date="2004" name="Genome Res.">
        <title>The status, quality, and expansion of the NIH full-length cDNA project: the Mammalian Gene Collection (MGC).</title>
        <authorList>
            <consortium name="The MGC Project Team"/>
        </authorList>
    </citation>
    <scope>NUCLEOTIDE SEQUENCE [LARGE SCALE MRNA]</scope>
    <source>
        <tissue>Skin</tissue>
    </source>
</reference>
<reference key="6">
    <citation type="journal article" date="2001" name="Proc. Natl. Acad. Sci. U.S.A.">
        <title>The gamma -secretase-cleaved C-terminal fragment of amyloid precursor protein mediates signaling to the nucleus.</title>
        <authorList>
            <person name="Gao Y."/>
            <person name="Pimplikar S.W."/>
        </authorList>
    </citation>
    <scope>PROTEASOMAL DEGRADATION</scope>
    <scope>SUBCELLULAR LOCATION</scope>
</reference>
<reference key="7">
    <citation type="journal article" date="2015" name="Science">
        <title>SELENOPROTEINS. CRL2 aids elimination of truncated selenoproteins produced by failed UGA/Sec decoding.</title>
        <authorList>
            <person name="Lin H.C."/>
            <person name="Ho S.C."/>
            <person name="Chen Y.Y."/>
            <person name="Khoo K.H."/>
            <person name="Hsu P.H."/>
            <person name="Yen H.C."/>
        </authorList>
    </citation>
    <scope>FUNCTION</scope>
</reference>
<reference key="8">
    <citation type="journal article" date="2018" name="Cell">
        <title>The eukaryotic proteome is shaped by E3 ubiquitin ligases targeting C-terminal degrons.</title>
        <authorList>
            <person name="Koren I."/>
            <person name="Timms R.T."/>
            <person name="Kula T."/>
            <person name="Xu Q."/>
            <person name="Li M.Z."/>
            <person name="Elledge S.J."/>
        </authorList>
    </citation>
    <scope>FUNCTION</scope>
    <scope>PATHWAY</scope>
    <scope>IDENTIFICATION IN A CRL2 E3 UBIQUITIN-PROTEIN LIGASE COMPLEX</scope>
</reference>
<reference key="9">
    <citation type="journal article" date="2018" name="Mol. Cell">
        <title>C-terminal end-directed protein elimination by CRL2 ubiquitin ligases.</title>
        <authorList>
            <person name="Lin H.C."/>
            <person name="Yeh C.W."/>
            <person name="Chen Y.F."/>
            <person name="Lee T.T."/>
            <person name="Hsieh P.Y."/>
            <person name="Rusnac D.V."/>
            <person name="Lin S.Y."/>
            <person name="Elledge S.J."/>
            <person name="Zheng N."/>
            <person name="Yen H.S."/>
        </authorList>
    </citation>
    <scope>FUNCTION</scope>
    <scope>PATHWAY</scope>
    <scope>IDENTIFICATION IN A CRL2 E3 UBIQUITIN-PROTEIN LIGASE COMPLEX</scope>
    <scope>INTERACTION WITH APP</scope>
    <scope>ACTIVITY REGULATION</scope>
</reference>
<evidence type="ECO:0000269" key="1">
    <source>
    </source>
</evidence>
<evidence type="ECO:0000269" key="2">
    <source>
    </source>
</evidence>
<evidence type="ECO:0000269" key="3">
    <source>
    </source>
</evidence>
<evidence type="ECO:0000269" key="4">
    <source>
    </source>
</evidence>
<evidence type="ECO:0000269" key="5">
    <source>
    </source>
</evidence>
<evidence type="ECO:0000303" key="6">
    <source>
    </source>
</evidence>
<evidence type="ECO:0000303" key="7">
    <source>
    </source>
</evidence>
<evidence type="ECO:0000303" key="8">
    <source>
    </source>
</evidence>
<evidence type="ECO:0000305" key="9"/>
<evidence type="ECO:0000312" key="10">
    <source>
        <dbReference type="HGNC" id="HGNC:622"/>
    </source>
</evidence>
<evidence type="ECO:0007829" key="11">
    <source>
        <dbReference type="PDB" id="8JAQ"/>
    </source>
</evidence>
<evidence type="ECO:0007829" key="12">
    <source>
        <dbReference type="PDB" id="8JAR"/>
    </source>
</evidence>
<comment type="function">
    <text evidence="2 3 4 5">Substrate-recognition component of a Cul2-RING (CRL2) E3 ubiquitin-protein ligase complex of the DesCEND (destruction via C-end degrons) pathway, which recognizes a C-degron located at the extreme C terminus of target proteins, leading to their ubiquitination and degradation (PubMed:29775578, PubMed:29779948). The C-degron recognized by the DesCEND pathway is usually a motif of less than ten residues and can be present in full-length proteins, truncated proteins or proteolytically cleaved forms (PubMed:29775578, PubMed:29779948). The CRL2(APPBP2) complex specifically recognizes proteins with a -Arg-Xaa-Xaa-Gly degron at the C-terminus, leading to their ubiquitination and degradation (PubMed:29775578, PubMed:29779948). The CRL2(APPBP2) complex mediates ubiquitination and degradation of truncated SELENOV selenoproteins produced by failed UGA/Sec decoding, which end with a -Arg-Xaa-Xaa-Gly degron (PubMed:26138980). May play a role in intracellular protein transport: may be involved in the translocation of APP along microtubules toward the cell surface (PubMed:9843960).</text>
</comment>
<comment type="activity regulation">
    <text evidence="3">E3 ubiquitin-protein ligase activity of the CRL2(APPBP2) complex is inhibited by APP.</text>
</comment>
<comment type="pathway">
    <text evidence="3 4">Protein modification; protein ubiquitination.</text>
</comment>
<comment type="subunit">
    <text evidence="3 4 5">Component of a CRL2 E3 ubiquitin-protein ligase complex, also named ECS (Elongin BC-CUL2/5-SOCS-box protein) complex, composed of CUL2, Elongin BC (ELOB and ELOC), RBX1 and substrate-specific adapter APPBP2 (PubMed:29775578, PubMed:29779948). Interacts with APP; APP interaction inhibits the E3 ubiquitin-protein ligase activity of the CRL2(APPBP2) complex (PubMed:29775578, PubMed:9843960).</text>
</comment>
<comment type="interaction">
    <interactant intactId="EBI-743771">
        <id>Q92624</id>
    </interactant>
    <interactant intactId="EBI-13217105">
        <id>P22760</id>
        <label>AADAC</label>
    </interactant>
    <organismsDiffer>false</organismsDiffer>
    <experiments>3</experiments>
</comment>
<comment type="interaction">
    <interactant intactId="EBI-743771">
        <id>Q92624</id>
    </interactant>
    <interactant intactId="EBI-351710">
        <id>P12814</id>
        <label>ACTN1</label>
    </interactant>
    <organismsDiffer>false</organismsDiffer>
    <experiments>3</experiments>
</comment>
<comment type="interaction">
    <interactant intactId="EBI-743771">
        <id>Q92624</id>
    </interactant>
    <interactant intactId="EBI-1053240">
        <id>P23526</id>
        <label>AHCY</label>
    </interactant>
    <organismsDiffer>false</organismsDiffer>
    <experiments>3</experiments>
</comment>
<comment type="interaction">
    <interactant intactId="EBI-743771">
        <id>Q92624</id>
    </interactant>
    <interactant intactId="EBI-3916527">
        <id>Q9UIJ7</id>
        <label>AK3</label>
    </interactant>
    <organismsDiffer>false</organismsDiffer>
    <experiments>6</experiments>
</comment>
<comment type="interaction">
    <interactant intactId="EBI-743771">
        <id>Q92624</id>
    </interactant>
    <interactant intactId="EBI-12400198">
        <id>O75891-4</id>
        <label>ALDH1L1</label>
    </interactant>
    <organismsDiffer>false</organismsDiffer>
    <experiments>3</experiments>
</comment>
<comment type="interaction">
    <interactant intactId="EBI-743771">
        <id>Q92624</id>
    </interactant>
    <interactant intactId="EBI-10261416">
        <id>Q8IUW1</id>
        <label>ANKRD10</label>
    </interactant>
    <organismsDiffer>false</organismsDiffer>
    <experiments>3</experiments>
</comment>
<comment type="interaction">
    <interactant intactId="EBI-743771">
        <id>Q92624</id>
    </interactant>
    <interactant intactId="EBI-10316475">
        <id>Q9NXR5</id>
        <label>ANKRD10</label>
    </interactant>
    <organismsDiffer>false</organismsDiffer>
    <experiments>3</experiments>
</comment>
<comment type="interaction">
    <interactant intactId="EBI-743771">
        <id>Q92624</id>
    </interactant>
    <interactant intactId="EBI-77613">
        <id>P05067</id>
        <label>APP</label>
    </interactant>
    <organismsDiffer>false</organismsDiffer>
    <experiments>3</experiments>
</comment>
<comment type="interaction">
    <interactant intactId="EBI-743771">
        <id>Q92624</id>
    </interactant>
    <interactant intactId="EBI-10252512">
        <id>Q6P1M9</id>
        <label>ARMCX5</label>
    </interactant>
    <organismsDiffer>false</organismsDiffer>
    <experiments>6</experiments>
</comment>
<comment type="interaction">
    <interactant intactId="EBI-743771">
        <id>Q92624</id>
    </interactant>
    <interactant intactId="EBI-12069500">
        <id>Q9HD20-3</id>
        <label>ATP13A1</label>
    </interactant>
    <organismsDiffer>false</organismsDiffer>
    <experiments>3</experiments>
</comment>
<comment type="interaction">
    <interactant intactId="EBI-743771">
        <id>Q92624</id>
    </interactant>
    <interactant intactId="EBI-12065992">
        <id>Q4VC05-2</id>
        <label>BCL7A</label>
    </interactant>
    <organismsDiffer>false</organismsDiffer>
    <experiments>3</experiments>
</comment>
<comment type="interaction">
    <interactant intactId="EBI-743771">
        <id>Q92624</id>
    </interactant>
    <interactant intactId="EBI-2042570">
        <id>Q9UBW5</id>
        <label>BIN2</label>
    </interactant>
    <organismsDiffer>false</organismsDiffer>
    <experiments>3</experiments>
</comment>
<comment type="interaction">
    <interactant intactId="EBI-743771">
        <id>Q92624</id>
    </interactant>
    <interactant intactId="EBI-10298364">
        <id>Q9BTE2</id>
        <label>C16orf35</label>
    </interactant>
    <organismsDiffer>false</organismsDiffer>
    <experiments>3</experiments>
</comment>
<comment type="interaction">
    <interactant intactId="EBI-743771">
        <id>Q92624</id>
    </interactant>
    <interactant intactId="EBI-2874661">
        <id>Q9BV19</id>
        <label>C1orf50</label>
    </interactant>
    <organismsDiffer>false</organismsDiffer>
    <experiments>6</experiments>
</comment>
<comment type="interaction">
    <interactant intactId="EBI-743771">
        <id>Q92624</id>
    </interactant>
    <interactant intactId="EBI-10244057">
        <id>Q5I0X4</id>
        <label>C6orf226</label>
    </interactant>
    <organismsDiffer>false</organismsDiffer>
    <experiments>6</experiments>
</comment>
<comment type="interaction">
    <interactant intactId="EBI-743771">
        <id>Q92624</id>
    </interactant>
    <interactant intactId="EBI-9083477">
        <id>Q9P0B6</id>
        <label>CCDC167</label>
    </interactant>
    <organismsDiffer>false</organismsDiffer>
    <experiments>3</experiments>
</comment>
<comment type="interaction">
    <interactant intactId="EBI-743771">
        <id>Q92624</id>
    </interactant>
    <interactant intactId="EBI-2836773">
        <id>Q9UK58</id>
        <label>CCNL1</label>
    </interactant>
    <organismsDiffer>false</organismsDiffer>
    <experiments>3</experiments>
</comment>
<comment type="interaction">
    <interactant intactId="EBI-743771">
        <id>Q92624</id>
    </interactant>
    <interactant intactId="EBI-726261">
        <id>Q00536</id>
        <label>CDK16</label>
    </interactant>
    <organismsDiffer>false</organismsDiffer>
    <experiments>3</experiments>
</comment>
<comment type="interaction">
    <interactant intactId="EBI-743771">
        <id>Q92624</id>
    </interactant>
    <interactant intactId="EBI-10206780">
        <id>P35523</id>
        <label>CLCN1</label>
    </interactant>
    <organismsDiffer>false</organismsDiffer>
    <experiments>6</experiments>
</comment>
<comment type="interaction">
    <interactant intactId="EBI-743771">
        <id>Q92624</id>
    </interactant>
    <interactant intactId="EBI-2529266">
        <id>Q17RW2</id>
        <label>COL24A1</label>
    </interactant>
    <organismsDiffer>false</organismsDiffer>
    <experiments>6</experiments>
</comment>
<comment type="interaction">
    <interactant intactId="EBI-743771">
        <id>Q92624</id>
    </interactant>
    <interactant intactId="EBI-723376">
        <id>Q9UQ03</id>
        <label>CORO2B</label>
    </interactant>
    <organismsDiffer>false</organismsDiffer>
    <experiments>6</experiments>
</comment>
<comment type="interaction">
    <interactant intactId="EBI-743771">
        <id>Q92624</id>
    </interactant>
    <interactant intactId="EBI-9087876">
        <id>P48730-2</id>
        <label>CSNK1D</label>
    </interactant>
    <organismsDiffer>false</organismsDiffer>
    <experiments>3</experiments>
</comment>
<comment type="interaction">
    <interactant intactId="EBI-743771">
        <id>Q92624</id>
    </interactant>
    <interactant intactId="EBI-748380">
        <id>P78368</id>
        <label>CSNK1G2</label>
    </interactant>
    <organismsDiffer>false</organismsDiffer>
    <experiments>3</experiments>
</comment>
<comment type="interaction">
    <interactant intactId="EBI-743771">
        <id>Q92624</id>
    </interactant>
    <interactant intactId="EBI-8832659">
        <id>P09228</id>
        <label>CST2</label>
    </interactant>
    <organismsDiffer>false</organismsDiffer>
    <experiments>3</experiments>
</comment>
<comment type="interaction">
    <interactant intactId="EBI-743771">
        <id>Q92624</id>
    </interactant>
    <interactant intactId="EBI-2562802">
        <id>Q2NKJ3</id>
        <label>CTC1</label>
    </interactant>
    <organismsDiffer>false</organismsDiffer>
    <experiments>3</experiments>
</comment>
<comment type="interaction">
    <interactant intactId="EBI-743771">
        <id>Q92624</id>
    </interactant>
    <interactant intactId="EBI-395625">
        <id>P81605</id>
        <label>DCD</label>
    </interactant>
    <organismsDiffer>false</organismsDiffer>
    <experiments>3</experiments>
</comment>
<comment type="interaction">
    <interactant intactId="EBI-743771">
        <id>Q92624</id>
    </interactant>
    <interactant intactId="EBI-354324">
        <id>Q13268</id>
        <label>DHRS2</label>
    </interactant>
    <organismsDiffer>false</organismsDiffer>
    <experiments>3</experiments>
</comment>
<comment type="interaction">
    <interactant intactId="EBI-743771">
        <id>Q92624</id>
    </interactant>
    <interactant intactId="EBI-8645574">
        <id>Q9UPQ8</id>
        <label>DOLK</label>
    </interactant>
    <organismsDiffer>false</organismsDiffer>
    <experiments>3</experiments>
</comment>
<comment type="interaction">
    <interactant intactId="EBI-743771">
        <id>Q92624</id>
    </interactant>
    <interactant intactId="EBI-749514">
        <id>P16444</id>
        <label>DPEP1</label>
    </interactant>
    <organismsDiffer>false</organismsDiffer>
    <experiments>3</experiments>
</comment>
<comment type="interaction">
    <interactant intactId="EBI-743771">
        <id>Q92624</id>
    </interactant>
    <interactant intactId="EBI-12275416">
        <id>Q14117</id>
        <label>DPYS</label>
    </interactant>
    <organismsDiffer>false</organismsDiffer>
    <experiments>3</experiments>
</comment>
<comment type="interaction">
    <interactant intactId="EBI-743771">
        <id>Q92624</id>
    </interactant>
    <interactant intactId="EBI-2564539">
        <id>Q96HE7</id>
        <label>ERO1A</label>
    </interactant>
    <organismsDiffer>false</organismsDiffer>
    <experiments>3</experiments>
</comment>
<comment type="interaction">
    <interactant intactId="EBI-743771">
        <id>Q92624</id>
    </interactant>
    <interactant intactId="EBI-2349801">
        <id>Q12841</id>
        <label>FSTL1</label>
    </interactant>
    <organismsDiffer>false</organismsDiffer>
    <experiments>8</experiments>
</comment>
<comment type="interaction">
    <interactant intactId="EBI-743771">
        <id>Q92624</id>
    </interactant>
    <interactant intactId="EBI-10216171">
        <id>P58549</id>
        <label>FXYD7</label>
    </interactant>
    <organismsDiffer>false</organismsDiffer>
    <experiments>6</experiments>
</comment>
<comment type="interaction">
    <interactant intactId="EBI-743771">
        <id>Q92624</id>
    </interactant>
    <interactant intactId="EBI-10232904">
        <id>Q14435-2</id>
        <label>GALNT3</label>
    </interactant>
    <organismsDiffer>false</organismsDiffer>
    <experiments>3</experiments>
</comment>
<comment type="interaction">
    <interactant intactId="EBI-743771">
        <id>Q92624</id>
    </interactant>
    <interactant intactId="EBI-10267082">
        <id>Q8N6F7</id>
        <label>GCSAM</label>
    </interactant>
    <organismsDiffer>false</organismsDiffer>
    <experiments>6</experiments>
</comment>
<comment type="interaction">
    <interactant intactId="EBI-743771">
        <id>Q92624</id>
    </interactant>
    <interactant intactId="EBI-12364679">
        <id>A0A0C4DFY5</id>
        <label>GPRC5C</label>
    </interactant>
    <organismsDiffer>false</organismsDiffer>
    <experiments>3</experiments>
</comment>
<comment type="interaction">
    <interactant intactId="EBI-743771">
        <id>Q92624</id>
    </interactant>
    <interactant intactId="EBI-353467">
        <id>P09211</id>
        <label>GSTP1</label>
    </interactant>
    <organismsDiffer>false</organismsDiffer>
    <experiments>6</experiments>
</comment>
<comment type="interaction">
    <interactant intactId="EBI-743771">
        <id>Q92624</id>
    </interactant>
    <interactant intactId="EBI-10171450">
        <id>B4DJ51</id>
        <label>HEL-S-72</label>
    </interactant>
    <organismsDiffer>false</organismsDiffer>
    <experiments>3</experiments>
</comment>
<comment type="interaction">
    <interactant intactId="EBI-743771">
        <id>Q92624</id>
    </interactant>
    <interactant intactId="EBI-1041722">
        <id>Q04756</id>
        <label>HGFAC</label>
    </interactant>
    <organismsDiffer>false</organismsDiffer>
    <experiments>3</experiments>
</comment>
<comment type="interaction">
    <interactant intactId="EBI-743771">
        <id>Q92624</id>
    </interactant>
    <interactant intactId="EBI-6381114">
        <id>Q8NE63</id>
        <label>HIPK4</label>
    </interactant>
    <organismsDiffer>false</organismsDiffer>
    <experiments>3</experiments>
</comment>
<comment type="interaction">
    <interactant intactId="EBI-743771">
        <id>Q92624</id>
    </interactant>
    <interactant intactId="EBI-10173457">
        <id>A4FTV9</id>
        <label>HIST1H2AK</label>
    </interactant>
    <organismsDiffer>false</organismsDiffer>
    <experiments>3</experiments>
</comment>
<comment type="interaction">
    <interactant intactId="EBI-743771">
        <id>Q92624</id>
    </interactant>
    <interactant intactId="EBI-3918847">
        <id>Q9H2F3</id>
        <label>HSD3B7</label>
    </interactant>
    <organismsDiffer>false</organismsDiffer>
    <experiments>3</experiments>
</comment>
<comment type="interaction">
    <interactant intactId="EBI-743771">
        <id>Q92624</id>
    </interactant>
    <interactant intactId="EBI-356933">
        <id>P34932</id>
        <label>HSPA4</label>
    </interactant>
    <organismsDiffer>false</organismsDiffer>
    <experiments>6</experiments>
</comment>
<comment type="interaction">
    <interactant intactId="EBI-743771">
        <id>Q92624</id>
    </interactant>
    <interactant intactId="EBI-307369">
        <id>Q14164</id>
        <label>IKBKE</label>
    </interactant>
    <organismsDiffer>false</organismsDiffer>
    <experiments>4</experiments>
</comment>
<comment type="interaction">
    <interactant intactId="EBI-743771">
        <id>Q92624</id>
    </interactant>
    <interactant intactId="EBI-11051601">
        <id>P16144-2</id>
        <label>ITGB4</label>
    </interactant>
    <organismsDiffer>false</organismsDiffer>
    <experiments>3</experiments>
</comment>
<comment type="interaction">
    <interactant intactId="EBI-743771">
        <id>Q92624</id>
    </interactant>
    <interactant intactId="EBI-1223434">
        <id>P18084</id>
        <label>ITGB5</label>
    </interactant>
    <organismsDiffer>false</organismsDiffer>
    <experiments>3</experiments>
</comment>
<comment type="interaction">
    <interactant intactId="EBI-743771">
        <id>Q92624</id>
    </interactant>
    <interactant intactId="EBI-12204387">
        <id>P50053-2</id>
        <label>KHK</label>
    </interactant>
    <organismsDiffer>false</organismsDiffer>
    <experiments>3</experiments>
</comment>
<comment type="interaction">
    <interactant intactId="EBI-743771">
        <id>Q92624</id>
    </interactant>
    <interactant intactId="EBI-751100">
        <id>Q6ZMV9</id>
        <label>KIF6</label>
    </interactant>
    <organismsDiffer>false</organismsDiffer>
    <experiments>3</experiments>
</comment>
<comment type="interaction">
    <interactant intactId="EBI-743771">
        <id>Q92624</id>
    </interactant>
    <interactant intactId="EBI-948266">
        <id>O14901</id>
        <label>KLF11</label>
    </interactant>
    <organismsDiffer>false</organismsDiffer>
    <experiments>3</experiments>
</comment>
<comment type="interaction">
    <interactant intactId="EBI-743771">
        <id>Q92624</id>
    </interactant>
    <interactant intactId="EBI-9477654">
        <id>Q6PF15</id>
        <label>KLHL35</label>
    </interactant>
    <organismsDiffer>false</organismsDiffer>
    <experiments>6</experiments>
</comment>
<comment type="interaction">
    <interactant intactId="EBI-743771">
        <id>Q92624</id>
    </interactant>
    <interactant intactId="EBI-2510837">
        <id>Q9NS86</id>
        <label>LANCL2</label>
    </interactant>
    <organismsDiffer>false</organismsDiffer>
    <experiments>6</experiments>
</comment>
<comment type="interaction">
    <interactant intactId="EBI-743771">
        <id>Q92624</id>
    </interactant>
    <interactant intactId="EBI-2690768">
        <id>Q496Y0</id>
        <label>LONRF3</label>
    </interactant>
    <organismsDiffer>false</organismsDiffer>
    <experiments>3</experiments>
</comment>
<comment type="interaction">
    <interactant intactId="EBI-743771">
        <id>Q92624</id>
    </interactant>
    <interactant intactId="EBI-352851">
        <id>Q9Y383</id>
        <label>LUC7L2</label>
    </interactant>
    <organismsDiffer>false</organismsDiffer>
    <experiments>6</experiments>
</comment>
<comment type="interaction">
    <interactant intactId="EBI-743771">
        <id>Q92624</id>
    </interactant>
    <interactant intactId="EBI-10198848">
        <id>Q9P127</id>
        <label>LUZP4</label>
    </interactant>
    <organismsDiffer>false</organismsDiffer>
    <experiments>6</experiments>
</comment>
<comment type="interaction">
    <interactant intactId="EBI-743771">
        <id>Q92624</id>
    </interactant>
    <interactant intactId="EBI-12243024">
        <id>Q9Y2E5</id>
        <label>MAN2B2</label>
    </interactant>
    <organismsDiffer>false</organismsDiffer>
    <experiments>3</experiments>
</comment>
<comment type="interaction">
    <interactant intactId="EBI-743771">
        <id>Q92624</id>
    </interactant>
    <interactant intactId="EBI-721209">
        <id>Q9GZU1</id>
        <label>MCOLN1</label>
    </interactant>
    <organismsDiffer>false</organismsDiffer>
    <experiments>3</experiments>
</comment>
<comment type="interaction">
    <interactant intactId="EBI-743771">
        <id>Q92624</id>
    </interactant>
    <interactant intactId="EBI-725713">
        <id>Q9UQ53</id>
        <label>MGAT4B</label>
    </interactant>
    <organismsDiffer>false</organismsDiffer>
    <experiments>3</experiments>
</comment>
<comment type="interaction">
    <interactant intactId="EBI-743771">
        <id>Q92624</id>
    </interactant>
    <interactant intactId="EBI-716132">
        <id>P42568</id>
        <label>MLLT3</label>
    </interactant>
    <organismsDiffer>false</organismsDiffer>
    <experiments>4</experiments>
</comment>
<comment type="interaction">
    <interactant intactId="EBI-743771">
        <id>Q92624</id>
    </interactant>
    <interactant intactId="EBI-12286419">
        <id>C0H5X0</id>
        <label>MMP28</label>
    </interactant>
    <organismsDiffer>false</organismsDiffer>
    <experiments>3</experiments>
</comment>
<comment type="interaction">
    <interactant intactId="EBI-743771">
        <id>Q92624</id>
    </interactant>
    <interactant intactId="EBI-355888">
        <id>P43246</id>
        <label>MSH2</label>
    </interactant>
    <organismsDiffer>false</organismsDiffer>
    <experiments>3</experiments>
</comment>
<comment type="interaction">
    <interactant intactId="EBI-743771">
        <id>Q92624</id>
    </interactant>
    <interactant intactId="EBI-12303989">
        <id>Q13421-3</id>
        <label>MSLN</label>
    </interactant>
    <organismsDiffer>false</organismsDiffer>
    <experiments>3</experiments>
</comment>
<comment type="interaction">
    <interactant intactId="EBI-743771">
        <id>Q92624</id>
    </interactant>
    <interactant intactId="EBI-744120">
        <id>Q969V5</id>
        <label>MUL1</label>
    </interactant>
    <organismsDiffer>false</organismsDiffer>
    <experiments>6</experiments>
</comment>
<comment type="interaction">
    <interactant intactId="EBI-743771">
        <id>Q92624</id>
    </interactant>
    <interactant intactId="EBI-12189939">
        <id>Q15746-7</id>
        <label>MYLK</label>
    </interactant>
    <organismsDiffer>false</organismsDiffer>
    <experiments>3</experiments>
</comment>
<comment type="interaction">
    <interactant intactId="EBI-743771">
        <id>Q92624</id>
    </interactant>
    <interactant intactId="EBI-389739">
        <id>P23511</id>
        <label>NFYA</label>
    </interactant>
    <organismsDiffer>false</organismsDiffer>
    <experiments>3</experiments>
</comment>
<comment type="interaction">
    <interactant intactId="EBI-743771">
        <id>Q92624</id>
    </interactant>
    <interactant intactId="EBI-349787">
        <id>O14745</id>
        <label>NHERF1</label>
    </interactant>
    <organismsDiffer>false</organismsDiffer>
    <experiments>3</experiments>
</comment>
<comment type="interaction">
    <interactant intactId="EBI-743771">
        <id>Q92624</id>
    </interactant>
    <interactant intactId="EBI-10296950">
        <id>Q9BRL4</id>
        <label>PCTK1</label>
    </interactant>
    <organismsDiffer>false</organismsDiffer>
    <experiments>3</experiments>
</comment>
<comment type="interaction">
    <interactant intactId="EBI-743771">
        <id>Q92624</id>
    </interactant>
    <interactant intactId="EBI-12241582">
        <id>Q7Z6Z6</id>
        <label>PNPLA5</label>
    </interactant>
    <organismsDiffer>false</organismsDiffer>
    <experiments>3</experiments>
</comment>
<comment type="interaction">
    <interactant intactId="EBI-743771">
        <id>Q92624</id>
    </interactant>
    <interactant intactId="EBI-12226639">
        <id>Q8IXY8</id>
        <label>PPIL6</label>
    </interactant>
    <organismsDiffer>false</organismsDiffer>
    <experiments>3</experiments>
</comment>
<comment type="interaction">
    <interactant intactId="EBI-743771">
        <id>Q92624</id>
    </interactant>
    <interactant intactId="EBI-716633">
        <id>Q12972</id>
        <label>PPP1R8</label>
    </interactant>
    <organismsDiffer>false</organismsDiffer>
    <experiments>3</experiments>
</comment>
<comment type="interaction">
    <interactant intactId="EBI-743771">
        <id>Q92624</id>
    </interactant>
    <interactant intactId="EBI-12252736">
        <id>Q12972-2</id>
        <label>PPP1R8</label>
    </interactant>
    <organismsDiffer>false</organismsDiffer>
    <experiments>3</experiments>
</comment>
<comment type="interaction">
    <interactant intactId="EBI-743771">
        <id>Q92624</id>
    </interactant>
    <interactant intactId="EBI-1383852">
        <id>P54646</id>
        <label>PRKAA2</label>
    </interactant>
    <organismsDiffer>false</organismsDiffer>
    <experiments>3</experiments>
</comment>
<comment type="interaction">
    <interactant intactId="EBI-743771">
        <id>Q92624</id>
    </interactant>
    <interactant intactId="EBI-2679622">
        <id>P22694</id>
        <label>PRKACB</label>
    </interactant>
    <organismsDiffer>false</organismsDiffer>
    <experiments>3</experiments>
</comment>
<comment type="interaction">
    <interactant intactId="EBI-743771">
        <id>Q92624</id>
    </interactant>
    <interactant intactId="EBI-716699">
        <id>P07602</id>
        <label>PSAP</label>
    </interactant>
    <organismsDiffer>false</organismsDiffer>
    <experiments>3</experiments>
</comment>
<comment type="interaction">
    <interactant intactId="EBI-743771">
        <id>Q92624</id>
    </interactant>
    <interactant intactId="EBI-14199621">
        <id>Q13635-3</id>
        <label>PTCH1</label>
    </interactant>
    <organismsDiffer>false</organismsDiffer>
    <experiments>3</experiments>
</comment>
<comment type="interaction">
    <interactant intactId="EBI-743771">
        <id>Q92624</id>
    </interactant>
    <interactant intactId="EBI-3919450">
        <id>Q8N2H3</id>
        <label>PYROXD2</label>
    </interactant>
    <organismsDiffer>false</organismsDiffer>
    <experiments>3</experiments>
</comment>
<comment type="interaction">
    <interactant intactId="EBI-743771">
        <id>Q92624</id>
    </interactant>
    <interactant intactId="EBI-3924400">
        <id>Q96AH8</id>
        <label>RAB7B</label>
    </interactant>
    <organismsDiffer>false</organismsDiffer>
    <experiments>3</experiments>
</comment>
<comment type="interaction">
    <interactant intactId="EBI-743771">
        <id>Q92624</id>
    </interactant>
    <interactant intactId="EBI-1055287">
        <id>Q15382</id>
        <label>RHEB</label>
    </interactant>
    <organismsDiffer>false</organismsDiffer>
    <experiments>3</experiments>
</comment>
<comment type="interaction">
    <interactant intactId="EBI-743771">
        <id>Q92624</id>
    </interactant>
    <interactant intactId="EBI-12072024">
        <id>Q5EBL4-3</id>
        <label>RILPL1</label>
    </interactant>
    <organismsDiffer>false</organismsDiffer>
    <experiments>3</experiments>
</comment>
<comment type="interaction">
    <interactant intactId="EBI-743771">
        <id>Q92624</id>
    </interactant>
    <interactant intactId="EBI-2341619">
        <id>Q8TEB7</id>
        <label>RNF128</label>
    </interactant>
    <organismsDiffer>false</organismsDiffer>
    <experiments>3</experiments>
</comment>
<comment type="interaction">
    <interactant intactId="EBI-743771">
        <id>Q92624</id>
    </interactant>
    <interactant intactId="EBI-2340642">
        <id>Q969K3</id>
        <label>RNF34</label>
    </interactant>
    <organismsDiffer>false</organismsDiffer>
    <experiments>3</experiments>
</comment>
<comment type="interaction">
    <interactant intactId="EBI-743771">
        <id>Q92624</id>
    </interactant>
    <interactant intactId="EBI-1237132">
        <id>O60942</id>
        <label>RNGTT</label>
    </interactant>
    <organismsDiffer>false</organismsDiffer>
    <experiments>3</experiments>
</comment>
<comment type="interaction">
    <interactant intactId="EBI-743771">
        <id>Q92624</id>
    </interactant>
    <interactant intactId="EBI-749186">
        <id>Q15050</id>
        <label>RRS1</label>
    </interactant>
    <organismsDiffer>false</organismsDiffer>
    <experiments>7</experiments>
</comment>
<comment type="interaction">
    <interactant intactId="EBI-743771">
        <id>Q92624</id>
    </interactant>
    <interactant intactId="EBI-10216195">
        <id>P59797</id>
        <label>SELENOV</label>
    </interactant>
    <organismsDiffer>false</organismsDiffer>
    <experiments>3</experiments>
</comment>
<comment type="interaction">
    <interactant intactId="EBI-743771">
        <id>Q92624</id>
    </interactant>
    <interactant intactId="EBI-751012">
        <id>Q8WU57</id>
        <label>SELI</label>
    </interactant>
    <organismsDiffer>false</organismsDiffer>
    <experiments>3</experiments>
</comment>
<comment type="interaction">
    <interactant intactId="EBI-743771">
        <id>Q92624</id>
    </interactant>
    <interactant intactId="EBI-749741">
        <id>Q4U2R8</id>
        <label>SLC22A6</label>
    </interactant>
    <organismsDiffer>false</organismsDiffer>
    <experiments>3</experiments>
</comment>
<comment type="interaction">
    <interactant intactId="EBI-743771">
        <id>Q92624</id>
    </interactant>
    <interactant intactId="EBI-2933255">
        <id>Q9BV35</id>
        <label>SLC25A23</label>
    </interactant>
    <organismsDiffer>false</organismsDiffer>
    <experiments>3</experiments>
</comment>
<comment type="interaction">
    <interactant intactId="EBI-743771">
        <id>Q92624</id>
    </interactant>
    <interactant intactId="EBI-12068238">
        <id>Q9NS82</id>
        <label>SLC7A10</label>
    </interactant>
    <organismsDiffer>false</organismsDiffer>
    <experiments>3</experiments>
</comment>
<comment type="interaction">
    <interactant intactId="EBI-743771">
        <id>Q92624</id>
    </interactant>
    <interactant intactId="EBI-715760">
        <id>Q9Y5X3</id>
        <label>SNX5</label>
    </interactant>
    <organismsDiffer>false</organismsDiffer>
    <experiments>3</experiments>
</comment>
<comment type="interaction">
    <interactant intactId="EBI-743771">
        <id>Q92624</id>
    </interactant>
    <interactant intactId="EBI-12229025">
        <id>Q9Y5X3-2</id>
        <label>SNX5</label>
    </interactant>
    <organismsDiffer>false</organismsDiffer>
    <experiments>3</experiments>
</comment>
<comment type="interaction">
    <interactant intactId="EBI-743771">
        <id>Q92624</id>
    </interactant>
    <interactant intactId="EBI-11960469">
        <id>P0CI01</id>
        <label>SPDYE6</label>
    </interactant>
    <organismsDiffer>false</organismsDiffer>
    <experiments>3</experiments>
</comment>
<comment type="interaction">
    <interactant intactId="EBI-743771">
        <id>Q92624</id>
    </interactant>
    <interactant intactId="EBI-10182857">
        <id>O15466</id>
        <label>ST8SIA5</label>
    </interactant>
    <organismsDiffer>false</organismsDiffer>
    <experiments>3</experiments>
</comment>
<comment type="interaction">
    <interactant intactId="EBI-743771">
        <id>Q92624</id>
    </interactant>
    <interactant intactId="EBI-7240490">
        <id>Q9UMZ2</id>
        <label>SYNRG</label>
    </interactant>
    <organismsDiffer>false</organismsDiffer>
    <experiments>3</experiments>
</comment>
<comment type="interaction">
    <interactant intactId="EBI-743771">
        <id>Q92624</id>
    </interactant>
    <interactant intactId="EBI-12353261">
        <id>Q9UMZ2-8</id>
        <label>SYNRG</label>
    </interactant>
    <organismsDiffer>false</organismsDiffer>
    <experiments>3</experiments>
</comment>
<comment type="interaction">
    <interactant intactId="EBI-743771">
        <id>Q92624</id>
    </interactant>
    <interactant intactId="EBI-751770">
        <id>Q9BT88</id>
        <label>SYT11</label>
    </interactant>
    <organismsDiffer>false</organismsDiffer>
    <experiments>3</experiments>
</comment>
<comment type="interaction">
    <interactant intactId="EBI-743771">
        <id>Q92624</id>
    </interactant>
    <interactant intactId="EBI-1027005">
        <id>Q15544</id>
        <label>TAF11</label>
    </interactant>
    <organismsDiffer>false</organismsDiffer>
    <experiments>6</experiments>
</comment>
<comment type="interaction">
    <interactant intactId="EBI-743771">
        <id>Q92624</id>
    </interactant>
    <interactant intactId="EBI-10290841">
        <id>Q96LR4</id>
        <label>TAFA4</label>
    </interactant>
    <organismsDiffer>false</organismsDiffer>
    <experiments>3</experiments>
</comment>
<comment type="interaction">
    <interactant intactId="EBI-743771">
        <id>Q92624</id>
    </interactant>
    <interactant intactId="EBI-715766">
        <id>Q12788</id>
        <label>TBL3</label>
    </interactant>
    <organismsDiffer>false</organismsDiffer>
    <experiments>4</experiments>
</comment>
<comment type="interaction">
    <interactant intactId="EBI-743771">
        <id>Q92624</id>
    </interactant>
    <interactant intactId="EBI-745182">
        <id>Q9BQ70</id>
        <label>TCF25</label>
    </interactant>
    <organismsDiffer>false</organismsDiffer>
    <experiments>3</experiments>
</comment>
<comment type="interaction">
    <interactant intactId="EBI-743771">
        <id>Q92624</id>
    </interactant>
    <interactant intactId="EBI-12039775">
        <id>Q05952</id>
        <label>TNP2</label>
    </interactant>
    <organismsDiffer>false</organismsDiffer>
    <experiments>3</experiments>
</comment>
<comment type="interaction">
    <interactant intactId="EBI-743771">
        <id>Q92624</id>
    </interactant>
    <interactant intactId="EBI-2515774">
        <id>Q8IZ69</id>
        <label>TRMT2A</label>
    </interactant>
    <organismsDiffer>false</organismsDiffer>
    <experiments>3</experiments>
</comment>
<comment type="interaction">
    <interactant intactId="EBI-743771">
        <id>Q92624</id>
    </interactant>
    <interactant intactId="EBI-2340879">
        <id>Q712K3</id>
        <label>UBE2R2</label>
    </interactant>
    <organismsDiffer>false</organismsDiffer>
    <experiments>3</experiments>
</comment>
<comment type="interaction">
    <interactant intactId="EBI-743771">
        <id>Q92624</id>
    </interactant>
    <interactant intactId="EBI-1054215">
        <id>Q9NYU1</id>
        <label>UGGT2</label>
    </interactant>
    <organismsDiffer>false</organismsDiffer>
    <experiments>3</experiments>
</comment>
<comment type="interaction">
    <interactant intactId="EBI-743771">
        <id>Q92624</id>
    </interactant>
    <interactant intactId="EBI-346375">
        <id>P42768</id>
        <label>WAS</label>
    </interactant>
    <organismsDiffer>false</organismsDiffer>
    <experiments>3</experiments>
</comment>
<comment type="interaction">
    <interactant intactId="EBI-743771">
        <id>Q92624</id>
    </interactant>
    <interactant intactId="EBI-746424">
        <id>Q96S15</id>
        <label>WDR24</label>
    </interactant>
    <organismsDiffer>false</organismsDiffer>
    <experiments>4</experiments>
</comment>
<comment type="interaction">
    <interactant intactId="EBI-743771">
        <id>Q92624</id>
    </interactant>
    <interactant intactId="EBI-2363713">
        <id>Q96NZ8</id>
        <label>WFIKKN1</label>
    </interactant>
    <organismsDiffer>false</organismsDiffer>
    <experiments>3</experiments>
</comment>
<comment type="interaction">
    <interactant intactId="EBI-743771">
        <id>Q92624</id>
    </interactant>
    <interactant intactId="EBI-742550">
        <id>Q96K80</id>
        <label>ZC3H10</label>
    </interactant>
    <organismsDiffer>false</organismsDiffer>
    <experiments>3</experiments>
</comment>
<comment type="interaction">
    <interactant intactId="EBI-743771">
        <id>Q92624</id>
    </interactant>
    <interactant intactId="EBI-4395497">
        <id>Q9BV97</id>
        <label>ZNF747</label>
    </interactant>
    <organismsDiffer>false</organismsDiffer>
    <experiments>3</experiments>
</comment>
<comment type="interaction">
    <interactant intactId="EBI-743771">
        <id>Q92624</id>
    </interactant>
    <interactant intactId="EBI-10307430">
        <id>Q9H669</id>
    </interactant>
    <organismsDiffer>false</organismsDiffer>
    <experiments>3</experiments>
</comment>
<comment type="subcellular location">
    <subcellularLocation>
        <location evidence="1">Nucleus</location>
    </subcellularLocation>
    <subcellularLocation>
        <location evidence="5">Cytoplasm</location>
        <location evidence="5">Cytoskeleton</location>
    </subcellularLocation>
    <subcellularLocation>
        <location evidence="5">Membrane</location>
        <topology evidence="5">Peripheral membrane protein</topology>
    </subcellularLocation>
    <text evidence="5">Associated with membranes and microtubules.</text>
</comment>
<comment type="PTM">
    <text evidence="1">Rapidly degraded by the proteasome upon overexpression of a C-terminal fragment of APP.</text>
</comment>
<comment type="sequence caution" evidence="9">
    <conflict type="erroneous initiation">
        <sequence resource="EMBL-CDS" id="BAA13217"/>
    </conflict>
</comment>
<keyword id="KW-0002">3D-structure</keyword>
<keyword id="KW-0963">Cytoplasm</keyword>
<keyword id="KW-0206">Cytoskeleton</keyword>
<keyword id="KW-0472">Membrane</keyword>
<keyword id="KW-0493">Microtubule</keyword>
<keyword id="KW-0539">Nucleus</keyword>
<keyword id="KW-0653">Protein transport</keyword>
<keyword id="KW-1267">Proteomics identification</keyword>
<keyword id="KW-1185">Reference proteome</keyword>
<keyword id="KW-0677">Repeat</keyword>
<keyword id="KW-0802">TPR repeat</keyword>
<keyword id="KW-0813">Transport</keyword>
<keyword id="KW-0833">Ubl conjugation pathway</keyword>
<name>APBP2_HUMAN</name>
<feature type="chain" id="PRO_0000106259" description="Amyloid protein-binding protein 2">
    <location>
        <begin position="1"/>
        <end position="585"/>
    </location>
</feature>
<feature type="repeat" description="TPR 1">
    <location>
        <begin position="50"/>
        <end position="83"/>
    </location>
</feature>
<feature type="repeat" description="TPR 2">
    <location>
        <begin position="120"/>
        <end position="153"/>
    </location>
</feature>
<feature type="repeat" description="TPR 3">
    <location>
        <begin position="206"/>
        <end position="239"/>
    </location>
</feature>
<feature type="repeat" description="TPR 4">
    <location>
        <begin position="288"/>
        <end position="321"/>
    </location>
</feature>
<feature type="repeat" description="TPR 5">
    <location>
        <begin position="333"/>
        <end position="367"/>
    </location>
</feature>
<feature type="repeat" description="TPR 6">
    <location>
        <begin position="429"/>
        <end position="462"/>
    </location>
</feature>
<feature type="repeat" description="TPR 7">
    <location>
        <begin position="471"/>
        <end position="505"/>
    </location>
</feature>
<feature type="repeat" description="TPR 8">
    <location>
        <begin position="514"/>
        <end position="547"/>
    </location>
</feature>
<feature type="sequence variant" id="VAR_052606" description="In dbSNP:rs34146848.">
    <original>S</original>
    <variation>N</variation>
    <location>
        <position position="561"/>
    </location>
</feature>
<feature type="sequence conflict" description="In Ref. 1; AAC83973." evidence="9" ref="1">
    <original>F</original>
    <variation>L</variation>
    <location>
        <position position="296"/>
    </location>
</feature>
<feature type="sequence conflict" description="In Ref. 1; AAC83973." evidence="9" ref="1">
    <original>K</original>
    <variation>R</variation>
    <location>
        <position position="325"/>
    </location>
</feature>
<feature type="sequence conflict" description="In Ref. 1; AAC83973." evidence="9" ref="1">
    <original>S</original>
    <variation>C</variation>
    <location>
        <position position="340"/>
    </location>
</feature>
<feature type="sequence conflict" description="In Ref. 1; AAC83973." evidence="9" ref="1">
    <original>L</original>
    <variation>V</variation>
    <location>
        <position position="354"/>
    </location>
</feature>
<feature type="sequence conflict" description="In Ref. 1; AAC83973." evidence="9" ref="1">
    <original>P</original>
    <variation>R</variation>
    <location>
        <position position="369"/>
    </location>
</feature>
<feature type="sequence conflict" description="In Ref. 1; AAC83973." evidence="9" ref="1">
    <original>N</original>
    <variation>K</variation>
    <location>
        <position position="542"/>
    </location>
</feature>
<feature type="helix" evidence="11">
    <location>
        <begin position="13"/>
        <end position="23"/>
    </location>
</feature>
<feature type="helix" evidence="11">
    <location>
        <begin position="26"/>
        <end position="28"/>
    </location>
</feature>
<feature type="turn" evidence="11">
    <location>
        <begin position="29"/>
        <end position="31"/>
    </location>
</feature>
<feature type="helix" evidence="11">
    <location>
        <begin position="32"/>
        <end position="34"/>
    </location>
</feature>
<feature type="helix" evidence="11">
    <location>
        <begin position="37"/>
        <end position="49"/>
    </location>
</feature>
<feature type="helix" evidence="11">
    <location>
        <begin position="53"/>
        <end position="60"/>
    </location>
</feature>
<feature type="helix" evidence="11">
    <location>
        <begin position="63"/>
        <end position="69"/>
    </location>
</feature>
<feature type="helix" evidence="11">
    <location>
        <begin position="77"/>
        <end position="89"/>
    </location>
</feature>
<feature type="helix" evidence="11">
    <location>
        <begin position="93"/>
        <end position="108"/>
    </location>
</feature>
<feature type="strand" evidence="12">
    <location>
        <begin position="109"/>
        <end position="111"/>
    </location>
</feature>
<feature type="helix" evidence="11">
    <location>
        <begin position="113"/>
        <end position="132"/>
    </location>
</feature>
<feature type="helix" evidence="11">
    <location>
        <begin position="136"/>
        <end position="152"/>
    </location>
</feature>
<feature type="helix" evidence="11">
    <location>
        <begin position="156"/>
        <end position="174"/>
    </location>
</feature>
<feature type="turn" evidence="11">
    <location>
        <begin position="175"/>
        <end position="177"/>
    </location>
</feature>
<feature type="helix" evidence="11">
    <location>
        <begin position="179"/>
        <end position="181"/>
    </location>
</feature>
<feature type="helix" evidence="11">
    <location>
        <begin position="182"/>
        <end position="199"/>
    </location>
</feature>
<feature type="helix" evidence="11">
    <location>
        <begin position="206"/>
        <end position="218"/>
    </location>
</feature>
<feature type="helix" evidence="11">
    <location>
        <begin position="222"/>
        <end position="234"/>
    </location>
</feature>
<feature type="strand" evidence="12">
    <location>
        <begin position="238"/>
        <end position="240"/>
    </location>
</feature>
<feature type="helix" evidence="11">
    <location>
        <begin position="242"/>
        <end position="258"/>
    </location>
</feature>
<feature type="helix" evidence="11">
    <location>
        <begin position="262"/>
        <end position="279"/>
    </location>
</feature>
<feature type="helix" evidence="11">
    <location>
        <begin position="285"/>
        <end position="299"/>
    </location>
</feature>
<feature type="turn" evidence="11">
    <location>
        <begin position="300"/>
        <end position="302"/>
    </location>
</feature>
<feature type="turn" evidence="11">
    <location>
        <begin position="305"/>
        <end position="307"/>
    </location>
</feature>
<feature type="helix" evidence="11">
    <location>
        <begin position="308"/>
        <end position="321"/>
    </location>
</feature>
<feature type="helix" evidence="11">
    <location>
        <begin position="327"/>
        <end position="343"/>
    </location>
</feature>
<feature type="turn" evidence="11">
    <location>
        <begin position="344"/>
        <end position="347"/>
    </location>
</feature>
<feature type="helix" evidence="11">
    <location>
        <begin position="351"/>
        <end position="367"/>
    </location>
</feature>
<feature type="helix" evidence="11">
    <location>
        <begin position="374"/>
        <end position="391"/>
    </location>
</feature>
<feature type="helix" evidence="11">
    <location>
        <begin position="396"/>
        <end position="420"/>
    </location>
</feature>
<feature type="strand" evidence="12">
    <location>
        <begin position="423"/>
        <end position="425"/>
    </location>
</feature>
<feature type="helix" evidence="11">
    <location>
        <begin position="426"/>
        <end position="442"/>
    </location>
</feature>
<feature type="helix" evidence="11">
    <location>
        <begin position="445"/>
        <end position="462"/>
    </location>
</feature>
<feature type="strand" evidence="11">
    <location>
        <begin position="465"/>
        <end position="467"/>
    </location>
</feature>
<feature type="helix" evidence="11">
    <location>
        <begin position="468"/>
        <end position="483"/>
    </location>
</feature>
<feature type="helix" evidence="11">
    <location>
        <begin position="488"/>
        <end position="505"/>
    </location>
</feature>
<feature type="helix" evidence="11">
    <location>
        <begin position="513"/>
        <end position="524"/>
    </location>
</feature>
<feature type="turn" evidence="11">
    <location>
        <begin position="525"/>
        <end position="527"/>
    </location>
</feature>
<feature type="helix" evidence="11">
    <location>
        <begin position="530"/>
        <end position="549"/>
    </location>
</feature>
<feature type="helix" evidence="11">
    <location>
        <begin position="556"/>
        <end position="560"/>
    </location>
</feature>
<feature type="helix" evidence="11">
    <location>
        <begin position="567"/>
        <end position="577"/>
    </location>
</feature>
<proteinExistence type="evidence at protein level"/>
<protein>
    <recommendedName>
        <fullName evidence="9">Amyloid protein-binding protein 2</fullName>
    </recommendedName>
    <alternativeName>
        <fullName evidence="6">Amyloid beta precursor protein-binding protein 2</fullName>
        <shortName evidence="6">APP-BP2</shortName>
    </alternativeName>
    <alternativeName>
        <fullName evidence="8">Protein interacting with APP tail 1</fullName>
    </alternativeName>
</protein>
<gene>
    <name evidence="6 10" type="primary">APPBP2</name>
    <name evidence="7" type="synonym">KIAA0228</name>
    <name evidence="8" type="synonym">PAT1</name>
</gene>
<dbReference type="EMBL" id="AF017782">
    <property type="protein sequence ID" value="AAC83973.1"/>
    <property type="molecule type" value="mRNA"/>
</dbReference>
<dbReference type="EMBL" id="D86981">
    <property type="protein sequence ID" value="BAA13217.1"/>
    <property type="status" value="ALT_INIT"/>
    <property type="molecule type" value="mRNA"/>
</dbReference>
<dbReference type="EMBL" id="AK292227">
    <property type="protein sequence ID" value="BAF84916.1"/>
    <property type="molecule type" value="mRNA"/>
</dbReference>
<dbReference type="EMBL" id="CH471179">
    <property type="protein sequence ID" value="EAW51406.1"/>
    <property type="molecule type" value="Genomic_DNA"/>
</dbReference>
<dbReference type="EMBL" id="BC018121">
    <property type="protein sequence ID" value="AAH18121.1"/>
    <property type="molecule type" value="mRNA"/>
</dbReference>
<dbReference type="CCDS" id="CCDS32699.1"/>
<dbReference type="RefSeq" id="NP_001269405.1">
    <property type="nucleotide sequence ID" value="NM_001282476.1"/>
</dbReference>
<dbReference type="RefSeq" id="NP_006371.2">
    <property type="nucleotide sequence ID" value="NM_006380.3"/>
</dbReference>
<dbReference type="PDB" id="8JAL">
    <property type="method" value="EM"/>
    <property type="resolution" value="3.30 A"/>
    <property type="chains" value="A/B=1-585"/>
</dbReference>
<dbReference type="PDB" id="8JAQ">
    <property type="method" value="EM"/>
    <property type="resolution" value="3.26 A"/>
    <property type="chains" value="A/B/J/K=1-578"/>
</dbReference>
<dbReference type="PDB" id="8JAR">
    <property type="method" value="EM"/>
    <property type="resolution" value="3.30 A"/>
    <property type="chains" value="A/B=1-579"/>
</dbReference>
<dbReference type="PDB" id="8JAS">
    <property type="method" value="EM"/>
    <property type="resolution" value="3.54 A"/>
    <property type="chains" value="A/B/J/K=1-585"/>
</dbReference>
<dbReference type="PDB" id="8JAU">
    <property type="method" value="EM"/>
    <property type="resolution" value="3.22 A"/>
    <property type="chains" value="A/B=1-585"/>
</dbReference>
<dbReference type="PDB" id="8JAV">
    <property type="method" value="EM"/>
    <property type="resolution" value="3.44 A"/>
    <property type="chains" value="A/B/J/K=1-585"/>
</dbReference>
<dbReference type="PDBsum" id="8JAL"/>
<dbReference type="PDBsum" id="8JAQ"/>
<dbReference type="PDBsum" id="8JAR"/>
<dbReference type="PDBsum" id="8JAS"/>
<dbReference type="PDBsum" id="8JAU"/>
<dbReference type="PDBsum" id="8JAV"/>
<dbReference type="EMDB" id="EMD-36129"/>
<dbReference type="EMDB" id="EMD-36131"/>
<dbReference type="EMDB" id="EMD-36132"/>
<dbReference type="EMDB" id="EMD-36133"/>
<dbReference type="EMDB" id="EMD-36134"/>
<dbReference type="EMDB" id="EMD-36135"/>
<dbReference type="SMR" id="Q92624"/>
<dbReference type="BioGRID" id="115769">
    <property type="interactions" value="194"/>
</dbReference>
<dbReference type="ComplexPortal" id="CPX-2221">
    <property type="entry name" value="APPBP2-Elongin C-Elongin B E3 ubiquitin ligase complex"/>
</dbReference>
<dbReference type="CORUM" id="Q92624"/>
<dbReference type="FunCoup" id="Q92624">
    <property type="interactions" value="3957"/>
</dbReference>
<dbReference type="IntAct" id="Q92624">
    <property type="interactions" value="178"/>
</dbReference>
<dbReference type="MINT" id="Q92624"/>
<dbReference type="STRING" id="9606.ENSP00000083182"/>
<dbReference type="iPTMnet" id="Q92624"/>
<dbReference type="PhosphoSitePlus" id="Q92624"/>
<dbReference type="BioMuta" id="APPBP2"/>
<dbReference type="DMDM" id="50400598"/>
<dbReference type="jPOST" id="Q92624"/>
<dbReference type="MassIVE" id="Q92624"/>
<dbReference type="PaxDb" id="9606-ENSP00000083182"/>
<dbReference type="PeptideAtlas" id="Q92624"/>
<dbReference type="ProteomicsDB" id="75379"/>
<dbReference type="Pumba" id="Q92624"/>
<dbReference type="Antibodypedia" id="31181">
    <property type="antibodies" value="327 antibodies from 30 providers"/>
</dbReference>
<dbReference type="DNASU" id="10513"/>
<dbReference type="Ensembl" id="ENST00000083182.8">
    <property type="protein sequence ID" value="ENSP00000083182.3"/>
    <property type="gene ID" value="ENSG00000062725.10"/>
</dbReference>
<dbReference type="GeneID" id="10513"/>
<dbReference type="KEGG" id="hsa:10513"/>
<dbReference type="MANE-Select" id="ENST00000083182.8">
    <property type="protein sequence ID" value="ENSP00000083182.3"/>
    <property type="RefSeq nucleotide sequence ID" value="NM_006380.5"/>
    <property type="RefSeq protein sequence ID" value="NP_006371.2"/>
</dbReference>
<dbReference type="UCSC" id="uc002iys.3">
    <property type="organism name" value="human"/>
</dbReference>
<dbReference type="AGR" id="HGNC:622"/>
<dbReference type="CTD" id="10513"/>
<dbReference type="DisGeNET" id="10513"/>
<dbReference type="GeneCards" id="APPBP2"/>
<dbReference type="HGNC" id="HGNC:622">
    <property type="gene designation" value="APPBP2"/>
</dbReference>
<dbReference type="HPA" id="ENSG00000062725">
    <property type="expression patterns" value="Low tissue specificity"/>
</dbReference>
<dbReference type="MIM" id="605324">
    <property type="type" value="gene"/>
</dbReference>
<dbReference type="neXtProt" id="NX_Q92624"/>
<dbReference type="OpenTargets" id="ENSG00000062725"/>
<dbReference type="PharmGKB" id="PA24912"/>
<dbReference type="VEuPathDB" id="HostDB:ENSG00000062725"/>
<dbReference type="eggNOG" id="KOG1840">
    <property type="taxonomic scope" value="Eukaryota"/>
</dbReference>
<dbReference type="GeneTree" id="ENSGT00390000010722"/>
<dbReference type="HOGENOM" id="CLU_019378_1_0_1"/>
<dbReference type="InParanoid" id="Q92624"/>
<dbReference type="OMA" id="YAESSHC"/>
<dbReference type="OrthoDB" id="7103806at2759"/>
<dbReference type="PAN-GO" id="Q92624">
    <property type="GO annotations" value="3 GO annotations based on evolutionary models"/>
</dbReference>
<dbReference type="PhylomeDB" id="Q92624"/>
<dbReference type="TreeFam" id="TF314010"/>
<dbReference type="PathwayCommons" id="Q92624"/>
<dbReference type="SignaLink" id="Q92624"/>
<dbReference type="UniPathway" id="UPA00143"/>
<dbReference type="BioGRID-ORCS" id="10513">
    <property type="hits" value="12 hits in 1158 CRISPR screens"/>
</dbReference>
<dbReference type="ChiTaRS" id="APPBP2">
    <property type="organism name" value="human"/>
</dbReference>
<dbReference type="GeneWiki" id="APPBP2"/>
<dbReference type="GenomeRNAi" id="10513"/>
<dbReference type="Pharos" id="Q92624">
    <property type="development level" value="Tbio"/>
</dbReference>
<dbReference type="PRO" id="PR:Q92624"/>
<dbReference type="Proteomes" id="UP000005640">
    <property type="component" value="Chromosome 17"/>
</dbReference>
<dbReference type="RNAct" id="Q92624">
    <property type="molecule type" value="protein"/>
</dbReference>
<dbReference type="Bgee" id="ENSG00000062725">
    <property type="expression patterns" value="Expressed in endothelial cell and 210 other cell types or tissues"/>
</dbReference>
<dbReference type="ExpressionAtlas" id="Q92624">
    <property type="expression patterns" value="baseline and differential"/>
</dbReference>
<dbReference type="GO" id="GO:0031462">
    <property type="term" value="C:Cul2-RING ubiquitin ligase complex"/>
    <property type="evidence" value="ECO:0000314"/>
    <property type="project" value="UniProtKB"/>
</dbReference>
<dbReference type="GO" id="GO:0005737">
    <property type="term" value="C:cytoplasm"/>
    <property type="evidence" value="ECO:0000304"/>
    <property type="project" value="ProtInc"/>
</dbReference>
<dbReference type="GO" id="GO:0030659">
    <property type="term" value="C:cytoplasmic vesicle membrane"/>
    <property type="evidence" value="ECO:0000314"/>
    <property type="project" value="MGI"/>
</dbReference>
<dbReference type="GO" id="GO:0005874">
    <property type="term" value="C:microtubule"/>
    <property type="evidence" value="ECO:0007669"/>
    <property type="project" value="UniProtKB-KW"/>
</dbReference>
<dbReference type="GO" id="GO:0005875">
    <property type="term" value="C:microtubule associated complex"/>
    <property type="evidence" value="ECO:0000304"/>
    <property type="project" value="ProtInc"/>
</dbReference>
<dbReference type="GO" id="GO:0005654">
    <property type="term" value="C:nucleoplasm"/>
    <property type="evidence" value="ECO:0000314"/>
    <property type="project" value="HPA"/>
</dbReference>
<dbReference type="GO" id="GO:0005634">
    <property type="term" value="C:nucleus"/>
    <property type="evidence" value="ECO:0000303"/>
    <property type="project" value="UniProtKB"/>
</dbReference>
<dbReference type="GO" id="GO:0003777">
    <property type="term" value="F:microtubule motor activity"/>
    <property type="evidence" value="ECO:0000304"/>
    <property type="project" value="ProtInc"/>
</dbReference>
<dbReference type="GO" id="GO:1990756">
    <property type="term" value="F:ubiquitin-like ligase-substrate adaptor activity"/>
    <property type="evidence" value="ECO:0000314"/>
    <property type="project" value="UniProtKB"/>
</dbReference>
<dbReference type="GO" id="GO:0006886">
    <property type="term" value="P:intracellular protein transport"/>
    <property type="evidence" value="ECO:0000304"/>
    <property type="project" value="ProtInc"/>
</dbReference>
<dbReference type="GO" id="GO:0046907">
    <property type="term" value="P:intracellular transport"/>
    <property type="evidence" value="ECO:0000314"/>
    <property type="project" value="MGI"/>
</dbReference>
<dbReference type="GO" id="GO:0043161">
    <property type="term" value="P:proteasome-mediated ubiquitin-dependent protein catabolic process"/>
    <property type="evidence" value="ECO:0000314"/>
    <property type="project" value="UniProtKB"/>
</dbReference>
<dbReference type="GO" id="GO:0016567">
    <property type="term" value="P:protein ubiquitination"/>
    <property type="evidence" value="ECO:0007669"/>
    <property type="project" value="UniProtKB-UniPathway"/>
</dbReference>
<dbReference type="FunFam" id="1.25.40.10:FF:000177">
    <property type="entry name" value="Amyloid beta precursor protein binding protein 2"/>
    <property type="match status" value="1"/>
</dbReference>
<dbReference type="FunFam" id="1.25.40.10:FF:000152">
    <property type="entry name" value="Amyloid protein-binding protein 2 isoform 1"/>
    <property type="match status" value="1"/>
</dbReference>
<dbReference type="Gene3D" id="1.25.40.10">
    <property type="entry name" value="Tetratricopeptide repeat domain"/>
    <property type="match status" value="2"/>
</dbReference>
<dbReference type="InterPro" id="IPR042476">
    <property type="entry name" value="APPBP2"/>
</dbReference>
<dbReference type="InterPro" id="IPR011990">
    <property type="entry name" value="TPR-like_helical_dom_sf"/>
</dbReference>
<dbReference type="InterPro" id="IPR019734">
    <property type="entry name" value="TPR_rpt"/>
</dbReference>
<dbReference type="PANTHER" id="PTHR46575">
    <property type="entry name" value="AMYLOID PROTEIN-BINDING PROTEIN 2"/>
    <property type="match status" value="1"/>
</dbReference>
<dbReference type="PANTHER" id="PTHR46575:SF1">
    <property type="entry name" value="AMYLOID PROTEIN-BINDING PROTEIN 2"/>
    <property type="match status" value="1"/>
</dbReference>
<dbReference type="Pfam" id="PF13374">
    <property type="entry name" value="TPR_10"/>
    <property type="match status" value="1"/>
</dbReference>
<dbReference type="Pfam" id="PF13424">
    <property type="entry name" value="TPR_12"/>
    <property type="match status" value="1"/>
</dbReference>
<dbReference type="SMART" id="SM00028">
    <property type="entry name" value="TPR"/>
    <property type="match status" value="3"/>
</dbReference>
<dbReference type="SUPFAM" id="SSF48452">
    <property type="entry name" value="TPR-like"/>
    <property type="match status" value="2"/>
</dbReference>
<dbReference type="PROSITE" id="PS50005">
    <property type="entry name" value="TPR"/>
    <property type="match status" value="2"/>
</dbReference>
<dbReference type="PROSITE" id="PS50293">
    <property type="entry name" value="TPR_REGION"/>
    <property type="match status" value="1"/>
</dbReference>
<sequence length="585" mass="66853">MAAVELEWIPETLYNTAISAVVDNYIRSRRDIRSLPENIQFDVYYKLYQQGRLCQLGSEFCELEVFAKVLRALDKRHLLHHCFQALMDHGVKVASVLAYSFSRRCSYIAESDAAVKEKAIQVGFVLGGFLSDAGWYSDAEKVFLSCLQLCTLHDEMLHWFRAVECCVRLLHVRNGNCKYHLGEETFKLAQTYMDKLSKHGQQANKAALYGELCALLFAKSHYDEAYKWCIEAMKEITAGLPVKVVVDVLRQASKACVVKREFKKAEQLIKHAVYLARDHFGSKHPKYSDTLLDYGFYLLNVDNICQSVAIYQAALDIRQSVFGGKNIHVATAHEDLAYSSYVHQYSSGKFDNALFHAERAIGIITHILPEDHLLLASSKRVKALILEEIAIDCHNKETEQRLLQEAHDLHLSSLQLAKKAFGEFNVQTAKHYGNLGRLYQSMRKFKEAEEMHIKAIQIKEQLLGQEDYEVALSVGHLASLYNYDMNQYENAEKLYLRSIAIGKKLFGEGYSGLEYDYRGLIKLYNSIGNYEKVFEYHNVLSNWNRLRDRQYSVTDALEDVSTSPQSTEEVVQSFLISQNVEGPSC</sequence>
<organism>
    <name type="scientific">Homo sapiens</name>
    <name type="common">Human</name>
    <dbReference type="NCBI Taxonomy" id="9606"/>
    <lineage>
        <taxon>Eukaryota</taxon>
        <taxon>Metazoa</taxon>
        <taxon>Chordata</taxon>
        <taxon>Craniata</taxon>
        <taxon>Vertebrata</taxon>
        <taxon>Euteleostomi</taxon>
        <taxon>Mammalia</taxon>
        <taxon>Eutheria</taxon>
        <taxon>Euarchontoglires</taxon>
        <taxon>Primates</taxon>
        <taxon>Haplorrhini</taxon>
        <taxon>Catarrhini</taxon>
        <taxon>Hominidae</taxon>
        <taxon>Homo</taxon>
    </lineage>
</organism>